<name>TBA_ENCCU</name>
<accession>Q8SRI6</accession>
<sequence length="441" mass="49315">MREIISLHIGQAGVQIGNACWELYCKEHGILPNGQLDQNKMDDESAESFFSPTSVGTYVPRTLMVDLEPGVLDSIKTGKYRELYHPGQLISGKEDAANNYARGHYTVGKEIIEPAMEQIRRMADSCDGLQGFLIYHSFGGGTGSGFASLMMDRLAAEFGKKSKLEFSVYPAPKIATAVVEPYNSILTTHTTLDYSDCSFLVDNEAIYDMCRNLGIQRPYYTDINRVIAQVVSSITASLRFPGSLNVDLTEFQTNLVPYPRIHFPLVAYSPMLSKEKAAHEKLSVQEITNACFEPQNQMVRCDTRKGKYMACCLLFRGDVNPKEANNATANVKAKRTNQFVEWCPTGFKVGINSRKPTVLDGEAMAEVSRAVCALSNTTAISEAWKRLNNKFDLMFSKRAFVHWYVGEGMEEGEFSEAREDLAMLEDDYERISSNAEPVDEY</sequence>
<feature type="chain" id="PRO_0000048167" description="Tubulin alpha chain">
    <location>
        <begin position="1"/>
        <end position="441"/>
    </location>
</feature>
<feature type="active site" evidence="2">
    <location>
        <position position="250"/>
    </location>
</feature>
<feature type="binding site" evidence="2">
    <location>
        <position position="11"/>
    </location>
    <ligand>
        <name>GTP</name>
        <dbReference type="ChEBI" id="CHEBI:37565"/>
    </ligand>
</feature>
<feature type="binding site" evidence="2">
    <location>
        <position position="68"/>
    </location>
    <ligand>
        <name>GTP</name>
        <dbReference type="ChEBI" id="CHEBI:37565"/>
    </ligand>
</feature>
<feature type="binding site" evidence="2">
    <location>
        <position position="68"/>
    </location>
    <ligand>
        <name>Mg(2+)</name>
        <dbReference type="ChEBI" id="CHEBI:18420"/>
    </ligand>
</feature>
<feature type="binding site" evidence="2">
    <location>
        <position position="137"/>
    </location>
    <ligand>
        <name>GTP</name>
        <dbReference type="ChEBI" id="CHEBI:37565"/>
    </ligand>
</feature>
<feature type="binding site" evidence="2">
    <location>
        <position position="141"/>
    </location>
    <ligand>
        <name>GTP</name>
        <dbReference type="ChEBI" id="CHEBI:37565"/>
    </ligand>
</feature>
<feature type="binding site" evidence="2">
    <location>
        <position position="142"/>
    </location>
    <ligand>
        <name>GTP</name>
        <dbReference type="ChEBI" id="CHEBI:37565"/>
    </ligand>
</feature>
<feature type="binding site" evidence="2">
    <location>
        <position position="176"/>
    </location>
    <ligand>
        <name>GTP</name>
        <dbReference type="ChEBI" id="CHEBI:37565"/>
    </ligand>
</feature>
<feature type="binding site" evidence="2">
    <location>
        <position position="203"/>
    </location>
    <ligand>
        <name>GTP</name>
        <dbReference type="ChEBI" id="CHEBI:37565"/>
    </ligand>
</feature>
<feature type="binding site" evidence="2">
    <location>
        <position position="224"/>
    </location>
    <ligand>
        <name>GTP</name>
        <dbReference type="ChEBI" id="CHEBI:37565"/>
    </ligand>
</feature>
<feature type="site" description="Involved in polymerization" evidence="1">
    <location>
        <position position="441"/>
    </location>
</feature>
<proteinExistence type="inferred from homology"/>
<gene>
    <name type="primary">TUB1</name>
    <name type="ordered locus">ECU07_1190</name>
</gene>
<organism>
    <name type="scientific">Encephalitozoon cuniculi (strain GB-M1)</name>
    <name type="common">Microsporidian parasite</name>
    <dbReference type="NCBI Taxonomy" id="284813"/>
    <lineage>
        <taxon>Eukaryota</taxon>
        <taxon>Fungi</taxon>
        <taxon>Fungi incertae sedis</taxon>
        <taxon>Microsporidia</taxon>
        <taxon>Unikaryonidae</taxon>
        <taxon>Encephalitozoon</taxon>
    </lineage>
</organism>
<evidence type="ECO:0000250" key="1"/>
<evidence type="ECO:0000250" key="2">
    <source>
        <dbReference type="UniProtKB" id="P68363"/>
    </source>
</evidence>
<evidence type="ECO:0000305" key="3"/>
<comment type="function">
    <text>Tubulin is the major constituent of microtubules, a cylinder consisting of laterally associated linear protofilaments composed of alpha- and beta-tubulin heterodimers. Microtubules grow by the addition of GTP-tubulin dimers to the microtubule end, where a stabilizing cap forms. Below the cap, tubulin dimers are in GDP-bound state, owing to GTPase activity of alpha-tubulin.</text>
</comment>
<comment type="catalytic activity">
    <reaction evidence="2">
        <text>GTP + H2O = GDP + phosphate + H(+)</text>
        <dbReference type="Rhea" id="RHEA:19669"/>
        <dbReference type="ChEBI" id="CHEBI:15377"/>
        <dbReference type="ChEBI" id="CHEBI:15378"/>
        <dbReference type="ChEBI" id="CHEBI:37565"/>
        <dbReference type="ChEBI" id="CHEBI:43474"/>
        <dbReference type="ChEBI" id="CHEBI:58189"/>
    </reaction>
    <physiologicalReaction direction="left-to-right" evidence="2">
        <dbReference type="Rhea" id="RHEA:19670"/>
    </physiologicalReaction>
</comment>
<comment type="cofactor">
    <cofactor evidence="2">
        <name>Mg(2+)</name>
        <dbReference type="ChEBI" id="CHEBI:18420"/>
    </cofactor>
</comment>
<comment type="subunit">
    <text>Dimer of alpha and beta chains. A typical microtubule is a hollow water-filled tube with an outer diameter of 25 nm and an inner diameter of 15 nM. Alpha-beta heterodimers associate head-to-tail to form protofilaments running lengthwise along the microtubule wall with the beta-tubulin subunit facing the microtubule plus end conferring a structural polarity. Microtubules usually have 13 protofilaments but different protofilament numbers can be found in some organisms and specialized cells.</text>
</comment>
<comment type="subcellular location">
    <subcellularLocation>
        <location>Cytoplasm</location>
        <location>Cytoskeleton</location>
    </subcellularLocation>
</comment>
<comment type="similarity">
    <text evidence="3">Belongs to the tubulin family.</text>
</comment>
<keyword id="KW-0963">Cytoplasm</keyword>
<keyword id="KW-0206">Cytoskeleton</keyword>
<keyword id="KW-0342">GTP-binding</keyword>
<keyword id="KW-0378">Hydrolase</keyword>
<keyword id="KW-0460">Magnesium</keyword>
<keyword id="KW-0479">Metal-binding</keyword>
<keyword id="KW-0493">Microtubule</keyword>
<keyword id="KW-0547">Nucleotide-binding</keyword>
<keyword id="KW-1185">Reference proteome</keyword>
<protein>
    <recommendedName>
        <fullName>Tubulin alpha chain</fullName>
        <ecNumber evidence="2">3.6.5.-</ecNumber>
    </recommendedName>
</protein>
<dbReference type="EC" id="3.6.5.-" evidence="2"/>
<dbReference type="EMBL" id="AL590447">
    <property type="protein sequence ID" value="CAD25652.1"/>
    <property type="molecule type" value="Genomic_DNA"/>
</dbReference>
<dbReference type="RefSeq" id="NP_586048.1">
    <property type="nucleotide sequence ID" value="NM_001041670.1"/>
</dbReference>
<dbReference type="SMR" id="Q8SRI6"/>
<dbReference type="FunCoup" id="Q8SRI6">
    <property type="interactions" value="44"/>
</dbReference>
<dbReference type="STRING" id="284813.Q8SRI6"/>
<dbReference type="GeneID" id="859478"/>
<dbReference type="KEGG" id="ecu:ECU07_1190"/>
<dbReference type="VEuPathDB" id="MicrosporidiaDB:ECU07_1190"/>
<dbReference type="HOGENOM" id="CLU_015718_0_0_1"/>
<dbReference type="InParanoid" id="Q8SRI6"/>
<dbReference type="OMA" id="YMASCIL"/>
<dbReference type="OrthoDB" id="1662883at2759"/>
<dbReference type="Proteomes" id="UP000000819">
    <property type="component" value="Chromosome VII"/>
</dbReference>
<dbReference type="GO" id="GO:0005737">
    <property type="term" value="C:cytoplasm"/>
    <property type="evidence" value="ECO:0007669"/>
    <property type="project" value="UniProtKB-KW"/>
</dbReference>
<dbReference type="GO" id="GO:0005874">
    <property type="term" value="C:microtubule"/>
    <property type="evidence" value="ECO:0007669"/>
    <property type="project" value="UniProtKB-KW"/>
</dbReference>
<dbReference type="GO" id="GO:0005525">
    <property type="term" value="F:GTP binding"/>
    <property type="evidence" value="ECO:0007669"/>
    <property type="project" value="UniProtKB-KW"/>
</dbReference>
<dbReference type="GO" id="GO:0016787">
    <property type="term" value="F:hydrolase activity"/>
    <property type="evidence" value="ECO:0007669"/>
    <property type="project" value="UniProtKB-KW"/>
</dbReference>
<dbReference type="GO" id="GO:0046872">
    <property type="term" value="F:metal ion binding"/>
    <property type="evidence" value="ECO:0007669"/>
    <property type="project" value="UniProtKB-KW"/>
</dbReference>
<dbReference type="GO" id="GO:0005200">
    <property type="term" value="F:structural constituent of cytoskeleton"/>
    <property type="evidence" value="ECO:0007669"/>
    <property type="project" value="InterPro"/>
</dbReference>
<dbReference type="GO" id="GO:0007017">
    <property type="term" value="P:microtubule-based process"/>
    <property type="evidence" value="ECO:0007669"/>
    <property type="project" value="InterPro"/>
</dbReference>
<dbReference type="CDD" id="cd02186">
    <property type="entry name" value="alpha_tubulin"/>
    <property type="match status" value="1"/>
</dbReference>
<dbReference type="FunFam" id="1.10.287.600:FF:000001">
    <property type="entry name" value="Tubulin alpha chain"/>
    <property type="match status" value="1"/>
</dbReference>
<dbReference type="FunFam" id="3.30.1330.20:FF:000001">
    <property type="entry name" value="Tubulin alpha chain"/>
    <property type="match status" value="1"/>
</dbReference>
<dbReference type="FunFam" id="3.40.50.1440:FF:000007">
    <property type="entry name" value="Tubulin alpha chain"/>
    <property type="match status" value="1"/>
</dbReference>
<dbReference type="Gene3D" id="1.10.287.600">
    <property type="entry name" value="Helix hairpin bin"/>
    <property type="match status" value="1"/>
</dbReference>
<dbReference type="Gene3D" id="3.30.1330.20">
    <property type="entry name" value="Tubulin/FtsZ, C-terminal domain"/>
    <property type="match status" value="1"/>
</dbReference>
<dbReference type="Gene3D" id="3.40.50.1440">
    <property type="entry name" value="Tubulin/FtsZ, GTPase domain"/>
    <property type="match status" value="1"/>
</dbReference>
<dbReference type="InterPro" id="IPR002452">
    <property type="entry name" value="Alpha_tubulin"/>
</dbReference>
<dbReference type="InterPro" id="IPR013838">
    <property type="entry name" value="Beta-tubulin_BS"/>
</dbReference>
<dbReference type="InterPro" id="IPR008280">
    <property type="entry name" value="Tub_FtsZ_C"/>
</dbReference>
<dbReference type="InterPro" id="IPR000217">
    <property type="entry name" value="Tubulin"/>
</dbReference>
<dbReference type="InterPro" id="IPR037103">
    <property type="entry name" value="Tubulin/FtsZ-like_C"/>
</dbReference>
<dbReference type="InterPro" id="IPR018316">
    <property type="entry name" value="Tubulin/FtsZ_2-layer-sand-dom"/>
</dbReference>
<dbReference type="InterPro" id="IPR036525">
    <property type="entry name" value="Tubulin/FtsZ_GTPase_sf"/>
</dbReference>
<dbReference type="InterPro" id="IPR023123">
    <property type="entry name" value="Tubulin_C"/>
</dbReference>
<dbReference type="InterPro" id="IPR017975">
    <property type="entry name" value="Tubulin_CS"/>
</dbReference>
<dbReference type="InterPro" id="IPR003008">
    <property type="entry name" value="Tubulin_FtsZ_GTPase"/>
</dbReference>
<dbReference type="PANTHER" id="PTHR11588">
    <property type="entry name" value="TUBULIN"/>
    <property type="match status" value="1"/>
</dbReference>
<dbReference type="Pfam" id="PF00091">
    <property type="entry name" value="Tubulin"/>
    <property type="match status" value="1"/>
</dbReference>
<dbReference type="Pfam" id="PF03953">
    <property type="entry name" value="Tubulin_C"/>
    <property type="match status" value="1"/>
</dbReference>
<dbReference type="PRINTS" id="PR01162">
    <property type="entry name" value="ALPHATUBULIN"/>
</dbReference>
<dbReference type="PRINTS" id="PR01161">
    <property type="entry name" value="TUBULIN"/>
</dbReference>
<dbReference type="SMART" id="SM00864">
    <property type="entry name" value="Tubulin"/>
    <property type="match status" value="1"/>
</dbReference>
<dbReference type="SMART" id="SM00865">
    <property type="entry name" value="Tubulin_C"/>
    <property type="match status" value="1"/>
</dbReference>
<dbReference type="SUPFAM" id="SSF55307">
    <property type="entry name" value="Tubulin C-terminal domain-like"/>
    <property type="match status" value="1"/>
</dbReference>
<dbReference type="SUPFAM" id="SSF52490">
    <property type="entry name" value="Tubulin nucleotide-binding domain-like"/>
    <property type="match status" value="1"/>
</dbReference>
<dbReference type="PROSITE" id="PS00227">
    <property type="entry name" value="TUBULIN"/>
    <property type="match status" value="1"/>
</dbReference>
<dbReference type="PROSITE" id="PS00228">
    <property type="entry name" value="TUBULIN_B_AUTOREG"/>
    <property type="match status" value="1"/>
</dbReference>
<reference key="1">
    <citation type="journal article" date="2001" name="Nature">
        <title>Genome sequence and gene compaction of the eukaryote parasite Encephalitozoon cuniculi.</title>
        <authorList>
            <person name="Katinka M.D."/>
            <person name="Duprat S."/>
            <person name="Cornillot E."/>
            <person name="Metenier G."/>
            <person name="Thomarat F."/>
            <person name="Prensier G."/>
            <person name="Barbe V."/>
            <person name="Peyretaillade E."/>
            <person name="Brottier P."/>
            <person name="Wincker P."/>
            <person name="Delbac F."/>
            <person name="El Alaoui H."/>
            <person name="Peyret P."/>
            <person name="Saurin W."/>
            <person name="Gouy M."/>
            <person name="Weissenbach J."/>
            <person name="Vivares C.P."/>
        </authorList>
    </citation>
    <scope>NUCLEOTIDE SEQUENCE [LARGE SCALE GENOMIC DNA]</scope>
    <source>
        <strain>GB-M1</strain>
    </source>
</reference>